<keyword id="KW-0007">Acetylation</keyword>
<keyword id="KW-0249">Electron transport</keyword>
<keyword id="KW-0472">Membrane</keyword>
<keyword id="KW-0496">Mitochondrion</keyword>
<keyword id="KW-0999">Mitochondrion inner membrane</keyword>
<keyword id="KW-0597">Phosphoprotein</keyword>
<keyword id="KW-1185">Reference proteome</keyword>
<keyword id="KW-0679">Respiratory chain</keyword>
<keyword id="KW-0812">Transmembrane</keyword>
<keyword id="KW-1133">Transmembrane helix</keyword>
<keyword id="KW-0813">Transport</keyword>
<feature type="initiator methionine" description="Removed" evidence="3">
    <location>
        <position position="1"/>
    </location>
</feature>
<feature type="chain" id="PRO_0000215772" description="HIG1 domain family member 1A, mitochondrial">
    <location>
        <begin position="2"/>
        <end position="93"/>
    </location>
</feature>
<feature type="transmembrane region" description="Helical" evidence="4">
    <location>
        <begin position="26"/>
        <end position="46"/>
    </location>
</feature>
<feature type="transmembrane region" description="Helical" evidence="4">
    <location>
        <begin position="60"/>
        <end position="80"/>
    </location>
</feature>
<feature type="domain" description="HIG1" evidence="4">
    <location>
        <begin position="2"/>
        <end position="93"/>
    </location>
</feature>
<feature type="modified residue" description="N-acetylserine" evidence="3">
    <location>
        <position position="2"/>
    </location>
</feature>
<feature type="modified residue" description="Phosphoserine" evidence="2">
    <location>
        <position position="8"/>
    </location>
</feature>
<gene>
    <name type="primary">HIGD1A</name>
</gene>
<evidence type="ECO:0000250" key="1"/>
<evidence type="ECO:0000250" key="2">
    <source>
        <dbReference type="UniProtKB" id="Q8VH49"/>
    </source>
</evidence>
<evidence type="ECO:0000250" key="3">
    <source>
        <dbReference type="UniProtKB" id="Q9Y241"/>
    </source>
</evidence>
<evidence type="ECO:0000255" key="4">
    <source>
        <dbReference type="PROSITE-ProRule" id="PRU00836"/>
    </source>
</evidence>
<reference key="1">
    <citation type="submission" date="2004-11" db="EMBL/GenBank/DDBJ databases">
        <authorList>
            <consortium name="The German cDNA consortium"/>
        </authorList>
    </citation>
    <scope>NUCLEOTIDE SEQUENCE [LARGE SCALE MRNA]</scope>
    <source>
        <tissue>Brain cortex</tissue>
    </source>
</reference>
<organism>
    <name type="scientific">Pongo abelii</name>
    <name type="common">Sumatran orangutan</name>
    <name type="synonym">Pongo pygmaeus abelii</name>
    <dbReference type="NCBI Taxonomy" id="9601"/>
    <lineage>
        <taxon>Eukaryota</taxon>
        <taxon>Metazoa</taxon>
        <taxon>Chordata</taxon>
        <taxon>Craniata</taxon>
        <taxon>Vertebrata</taxon>
        <taxon>Euteleostomi</taxon>
        <taxon>Mammalia</taxon>
        <taxon>Eutheria</taxon>
        <taxon>Euarchontoglires</taxon>
        <taxon>Primates</taxon>
        <taxon>Haplorrhini</taxon>
        <taxon>Catarrhini</taxon>
        <taxon>Hominidae</taxon>
        <taxon>Pongo</taxon>
    </lineage>
</organism>
<comment type="function">
    <text evidence="1">Proposed subunit of cytochrome c oxidase (COX, complex IV), which is the terminal component of the mitochondrial respiratory chain that catalyzes the reduction of oxygen to water. May play a role in the assembly of respiratory supercomplexes (By similarity).</text>
</comment>
<comment type="subunit">
    <text evidence="1">Associates with cytochrome c oxidase (COX, complex IV); proposed complex component. Also associates with respiratory chain supercomplexes (By similarity).</text>
</comment>
<comment type="subcellular location">
    <subcellularLocation>
        <location evidence="4">Mitochondrion membrane</location>
        <topology evidence="4">Multi-pass membrane protein</topology>
    </subcellularLocation>
    <subcellularLocation>
        <location evidence="1">Mitochondrion inner membrane</location>
    </subcellularLocation>
</comment>
<sequence>MSTDTGVSLPSYEEDQGSKLIRKAKEAPFVPVGIAGFAAIVAYGLYKLKSRGNTKMSIHLIHMRVAAQGFVVGAMTVGMGYSMYREFWAKPKP</sequence>
<protein>
    <recommendedName>
        <fullName>HIG1 domain family member 1A, mitochondrial</fullName>
    </recommendedName>
</protein>
<dbReference type="EMBL" id="CR925959">
    <property type="protein sequence ID" value="CAI29612.1"/>
    <property type="molecule type" value="mRNA"/>
</dbReference>
<dbReference type="RefSeq" id="NP_001127074.1">
    <property type="nucleotide sequence ID" value="NM_001133602.1"/>
</dbReference>
<dbReference type="BMRB" id="Q5NVQ1"/>
<dbReference type="SMR" id="Q5NVQ1"/>
<dbReference type="FunCoup" id="Q5NVQ1">
    <property type="interactions" value="968"/>
</dbReference>
<dbReference type="STRING" id="9601.ENSPPYP00000015631"/>
<dbReference type="Ensembl" id="ENSPPYT00000016252.2">
    <property type="protein sequence ID" value="ENSPPYP00000015631.1"/>
    <property type="gene ID" value="ENSPPYG00000013974.3"/>
</dbReference>
<dbReference type="GeneID" id="100174104"/>
<dbReference type="KEGG" id="pon:100174104"/>
<dbReference type="CTD" id="25994"/>
<dbReference type="eggNOG" id="KOG4431">
    <property type="taxonomic scope" value="Eukaryota"/>
</dbReference>
<dbReference type="GeneTree" id="ENSGT00940000154276"/>
<dbReference type="HOGENOM" id="CLU_153308_2_0_1"/>
<dbReference type="InParanoid" id="Q5NVQ1"/>
<dbReference type="OMA" id="DQGEAPC"/>
<dbReference type="OrthoDB" id="10003563at2759"/>
<dbReference type="TreeFam" id="TF314628"/>
<dbReference type="Proteomes" id="UP000001595">
    <property type="component" value="Chromosome 3"/>
</dbReference>
<dbReference type="GO" id="GO:0005743">
    <property type="term" value="C:mitochondrial inner membrane"/>
    <property type="evidence" value="ECO:0007669"/>
    <property type="project" value="UniProtKB-SubCell"/>
</dbReference>
<dbReference type="GO" id="GO:0005654">
    <property type="term" value="C:nucleoplasm"/>
    <property type="evidence" value="ECO:0007669"/>
    <property type="project" value="Ensembl"/>
</dbReference>
<dbReference type="GO" id="GO:0032991">
    <property type="term" value="C:protein-containing complex"/>
    <property type="evidence" value="ECO:0007669"/>
    <property type="project" value="Ensembl"/>
</dbReference>
<dbReference type="GO" id="GO:0097250">
    <property type="term" value="P:mitochondrial respirasome assembly"/>
    <property type="evidence" value="ECO:0007669"/>
    <property type="project" value="TreeGrafter"/>
</dbReference>
<dbReference type="GO" id="GO:0043066">
    <property type="term" value="P:negative regulation of apoptotic process"/>
    <property type="evidence" value="ECO:0007669"/>
    <property type="project" value="Ensembl"/>
</dbReference>
<dbReference type="Gene3D" id="6.10.140.1320">
    <property type="match status" value="1"/>
</dbReference>
<dbReference type="InterPro" id="IPR007667">
    <property type="entry name" value="Hypoxia_induced_domain"/>
</dbReference>
<dbReference type="InterPro" id="IPR050355">
    <property type="entry name" value="RCF1"/>
</dbReference>
<dbReference type="PANTHER" id="PTHR12297:SF5">
    <property type="entry name" value="HIG1 DOMAIN FAMILY MEMBER 1A, MITOCHONDRIAL"/>
    <property type="match status" value="1"/>
</dbReference>
<dbReference type="PANTHER" id="PTHR12297">
    <property type="entry name" value="HYPOXIA-INDUCBILE GENE 1 HIG1 -RELATED"/>
    <property type="match status" value="1"/>
</dbReference>
<dbReference type="Pfam" id="PF04588">
    <property type="entry name" value="HIG_1_N"/>
    <property type="match status" value="1"/>
</dbReference>
<dbReference type="PROSITE" id="PS51503">
    <property type="entry name" value="HIG1"/>
    <property type="match status" value="1"/>
</dbReference>
<proteinExistence type="inferred from homology"/>
<name>HIG1A_PONAB</name>
<accession>Q5NVQ1</accession>